<reference key="1">
    <citation type="journal article" date="1991" name="Gene">
        <title>The porcine tumor necrosis factor-encoding genes: sequence and comparative analysis.</title>
        <authorList>
            <person name="Kuhnert P."/>
            <person name="Wuethrich C."/>
            <person name="Peterhans E."/>
            <person name="Pauli U."/>
        </authorList>
    </citation>
    <scope>NUCLEOTIDE SEQUENCE [GENOMIC DNA]</scope>
    <source>
        <tissue>Liver</tissue>
    </source>
</reference>
<reference key="2">
    <citation type="journal article" date="2001" name="Tissue Antigens">
        <title>Sequence of the swine major histocompatibility complex region containing all non-classical class I genes.</title>
        <authorList>
            <person name="Chardon P."/>
            <person name="Rogel-Gaillard C."/>
            <person name="Cattolico L."/>
            <person name="Duprat S."/>
            <person name="Vaiman M."/>
            <person name="Renard C."/>
        </authorList>
    </citation>
    <scope>NUCLEOTIDE SEQUENCE [LARGE SCALE GENOMIC DNA]</scope>
    <source>
        <strain>Large white</strain>
        <tissue>Fibroblast</tissue>
    </source>
</reference>
<reference key="3">
    <citation type="submission" date="2007-05" db="EMBL/GenBank/DDBJ databases">
        <authorList>
            <consortium name="Porcine genome sequencing project"/>
        </authorList>
    </citation>
    <scope>NUCLEOTIDE SEQUENCE [LARGE SCALE GENOMIC DNA]</scope>
</reference>
<gene>
    <name type="primary">LTA</name>
    <name type="synonym">TNFB</name>
    <name type="synonym">TNFSF1</name>
</gene>
<accession>P26445</accession>
<accession>A5D9N9</accession>
<dbReference type="EMBL" id="X54859">
    <property type="protein sequence ID" value="CAA38638.1"/>
    <property type="molecule type" value="Genomic_DNA"/>
</dbReference>
<dbReference type="EMBL" id="AJ251914">
    <property type="protein sequence ID" value="CAB63853.1"/>
    <property type="molecule type" value="Genomic_DNA"/>
</dbReference>
<dbReference type="EMBL" id="BX548169">
    <property type="protein sequence ID" value="CAN59690.1"/>
    <property type="molecule type" value="Genomic_DNA"/>
</dbReference>
<dbReference type="PIR" id="S17289">
    <property type="entry name" value="S17289"/>
</dbReference>
<dbReference type="RefSeq" id="NP_999618.1">
    <property type="nucleotide sequence ID" value="NM_214453.1"/>
</dbReference>
<dbReference type="SMR" id="P26445"/>
<dbReference type="FunCoup" id="P26445">
    <property type="interactions" value="80"/>
</dbReference>
<dbReference type="STRING" id="9823.ENSSSCP00000028564"/>
<dbReference type="GlyCosmos" id="P26445">
    <property type="glycosylation" value="1 site, No reported glycans"/>
</dbReference>
<dbReference type="GlyGen" id="P26445">
    <property type="glycosylation" value="1 site"/>
</dbReference>
<dbReference type="PaxDb" id="9823-ENSSSCP00000001490"/>
<dbReference type="Ensembl" id="ENSSSCT00000034506.4">
    <property type="protein sequence ID" value="ENSSSCP00000028564.1"/>
    <property type="gene ID" value="ENSSSCG00000001403.7"/>
</dbReference>
<dbReference type="Ensembl" id="ENSSSCT00000107784.1">
    <property type="protein sequence ID" value="ENSSSCP00000082172.1"/>
    <property type="gene ID" value="ENSSSCG00000001403.7"/>
</dbReference>
<dbReference type="Ensembl" id="ENSSSCT00015076476.1">
    <property type="protein sequence ID" value="ENSSSCP00015030724.1"/>
    <property type="gene ID" value="ENSSSCG00015057385.1"/>
</dbReference>
<dbReference type="Ensembl" id="ENSSSCT00015076721.1">
    <property type="protein sequence ID" value="ENSSSCP00015030833.1"/>
    <property type="gene ID" value="ENSSSCG00015057385.1"/>
</dbReference>
<dbReference type="Ensembl" id="ENSSSCT00025108214.1">
    <property type="protein sequence ID" value="ENSSSCP00025048969.1"/>
    <property type="gene ID" value="ENSSSCG00025077752.1"/>
</dbReference>
<dbReference type="Ensembl" id="ENSSSCT00025108215.1">
    <property type="protein sequence ID" value="ENSSSCP00025048970.1"/>
    <property type="gene ID" value="ENSSSCG00025077752.1"/>
</dbReference>
<dbReference type="Ensembl" id="ENSSSCT00030091914.1">
    <property type="protein sequence ID" value="ENSSSCP00030042302.1"/>
    <property type="gene ID" value="ENSSSCG00030065787.1"/>
</dbReference>
<dbReference type="Ensembl" id="ENSSSCT00030091932.1">
    <property type="protein sequence ID" value="ENSSSCP00030042313.1"/>
    <property type="gene ID" value="ENSSSCG00030065787.1"/>
</dbReference>
<dbReference type="Ensembl" id="ENSSSCT00035025316.1">
    <property type="protein sequence ID" value="ENSSSCP00035009571.1"/>
    <property type="gene ID" value="ENSSSCG00035019536.1"/>
</dbReference>
<dbReference type="Ensembl" id="ENSSSCT00040097162.1">
    <property type="protein sequence ID" value="ENSSSCP00040043299.1"/>
    <property type="gene ID" value="ENSSSCG00040070752.1"/>
</dbReference>
<dbReference type="Ensembl" id="ENSSSCT00040097211.1">
    <property type="protein sequence ID" value="ENSSSCP00040043321.1"/>
    <property type="gene ID" value="ENSSSCG00040070752.1"/>
</dbReference>
<dbReference type="Ensembl" id="ENSSSCT00045065801.1">
    <property type="protein sequence ID" value="ENSSSCP00045046587.1"/>
    <property type="gene ID" value="ENSSSCG00045038040.1"/>
</dbReference>
<dbReference type="Ensembl" id="ENSSSCT00045065841.1">
    <property type="protein sequence ID" value="ENSSSCP00045046623.1"/>
    <property type="gene ID" value="ENSSSCG00045038040.1"/>
</dbReference>
<dbReference type="Ensembl" id="ENSSSCT00050007998.1">
    <property type="protein sequence ID" value="ENSSSCP00050003405.1"/>
    <property type="gene ID" value="ENSSSCG00050005882.1"/>
</dbReference>
<dbReference type="Ensembl" id="ENSSSCT00050008003.1">
    <property type="protein sequence ID" value="ENSSSCP00050003407.1"/>
    <property type="gene ID" value="ENSSSCG00050005882.1"/>
</dbReference>
<dbReference type="Ensembl" id="ENSSSCT00055057123.1">
    <property type="protein sequence ID" value="ENSSSCP00055045693.1"/>
    <property type="gene ID" value="ENSSSCG00055028789.1"/>
</dbReference>
<dbReference type="Ensembl" id="ENSSSCT00055057155.1">
    <property type="protein sequence ID" value="ENSSSCP00055045722.1"/>
    <property type="gene ID" value="ENSSSCG00055028789.1"/>
</dbReference>
<dbReference type="Ensembl" id="ENSSSCT00060058463.1">
    <property type="protein sequence ID" value="ENSSSCP00060025023.1"/>
    <property type="gene ID" value="ENSSSCG00060043124.1"/>
</dbReference>
<dbReference type="Ensembl" id="ENSSSCT00060058470.1">
    <property type="protein sequence ID" value="ENSSSCP00060025028.1"/>
    <property type="gene ID" value="ENSSSCG00060043124.1"/>
</dbReference>
<dbReference type="Ensembl" id="ENSSSCT00065034394.1">
    <property type="protein sequence ID" value="ENSSSCP00065014269.1"/>
    <property type="gene ID" value="ENSSSCG00065025686.1"/>
</dbReference>
<dbReference type="Ensembl" id="ENSSSCT00070048168.1">
    <property type="protein sequence ID" value="ENSSSCP00070040662.1"/>
    <property type="gene ID" value="ENSSSCG00070024123.1"/>
</dbReference>
<dbReference type="Ensembl" id="ENSSSCT00070048171.1">
    <property type="protein sequence ID" value="ENSSSCP00070040664.1"/>
    <property type="gene ID" value="ENSSSCG00070024123.1"/>
</dbReference>
<dbReference type="Ensembl" id="ENSSSCT00085020783">
    <property type="protein sequence ID" value="ENSSSCP00085014258"/>
    <property type="gene ID" value="ENSSSCG00085011147"/>
</dbReference>
<dbReference type="Ensembl" id="ENSSSCT00090028596">
    <property type="protein sequence ID" value="ENSSSCP00090017663"/>
    <property type="gene ID" value="ENSSSCG00090016230"/>
</dbReference>
<dbReference type="Ensembl" id="ENSSSCT00105040771">
    <property type="protein sequence ID" value="ENSSSCP00105028412"/>
    <property type="gene ID" value="ENSSSCG00105021364"/>
</dbReference>
<dbReference type="Ensembl" id="ENSSSCT00110043135">
    <property type="protein sequence ID" value="ENSSSCP00110030280"/>
    <property type="gene ID" value="ENSSSCG00110022323"/>
</dbReference>
<dbReference type="Ensembl" id="ENSSSCT00115014133">
    <property type="protein sequence ID" value="ENSSSCP00115013344"/>
    <property type="gene ID" value="ENSSSCG00115008102"/>
</dbReference>
<dbReference type="Ensembl" id="ENSSSCT00130037427">
    <property type="protein sequence ID" value="ENSSSCP00130026246"/>
    <property type="gene ID" value="ENSSSCG00130019302"/>
</dbReference>
<dbReference type="GeneID" id="407742"/>
<dbReference type="KEGG" id="ssc:407742"/>
<dbReference type="CTD" id="4049"/>
<dbReference type="VGNC" id="VGNC:89881">
    <property type="gene designation" value="LTA"/>
</dbReference>
<dbReference type="eggNOG" id="ENOG502S4K8">
    <property type="taxonomic scope" value="Eukaryota"/>
</dbReference>
<dbReference type="GeneTree" id="ENSGT01060000248544"/>
<dbReference type="HOGENOM" id="CLU_070352_4_0_1"/>
<dbReference type="InParanoid" id="P26445"/>
<dbReference type="OMA" id="RSACQNV"/>
<dbReference type="OrthoDB" id="9940698at2759"/>
<dbReference type="TreeFam" id="TF332169"/>
<dbReference type="Reactome" id="R-SSC-5668541">
    <property type="pathway name" value="TNFR2 non-canonical NF-kB pathway"/>
</dbReference>
<dbReference type="Reactome" id="R-SSC-5669034">
    <property type="pathway name" value="TNFs bind their physiological receptors"/>
</dbReference>
<dbReference type="Reactome" id="R-SSC-5676594">
    <property type="pathway name" value="TNF receptor superfamily (TNFSF) members mediating non-canonical NF-kB pathway"/>
</dbReference>
<dbReference type="Proteomes" id="UP000008227">
    <property type="component" value="Chromosome 7"/>
</dbReference>
<dbReference type="Proteomes" id="UP000314985">
    <property type="component" value="Chromosome 7"/>
</dbReference>
<dbReference type="Proteomes" id="UP000694570">
    <property type="component" value="Unplaced"/>
</dbReference>
<dbReference type="Proteomes" id="UP000694571">
    <property type="component" value="Unplaced"/>
</dbReference>
<dbReference type="Proteomes" id="UP000694720">
    <property type="component" value="Unplaced"/>
</dbReference>
<dbReference type="Proteomes" id="UP000694722">
    <property type="component" value="Unplaced"/>
</dbReference>
<dbReference type="Proteomes" id="UP000694723">
    <property type="component" value="Unplaced"/>
</dbReference>
<dbReference type="Proteomes" id="UP000694724">
    <property type="component" value="Unplaced"/>
</dbReference>
<dbReference type="Proteomes" id="UP000694725">
    <property type="component" value="Unplaced"/>
</dbReference>
<dbReference type="Proteomes" id="UP000694726">
    <property type="component" value="Unplaced"/>
</dbReference>
<dbReference type="Proteomes" id="UP000694727">
    <property type="component" value="Unplaced"/>
</dbReference>
<dbReference type="Proteomes" id="UP000694728">
    <property type="component" value="Unplaced"/>
</dbReference>
<dbReference type="Bgee" id="ENSSSCG00000001403">
    <property type="expression patterns" value="Expressed in blood and 11 other cell types or tissues"/>
</dbReference>
<dbReference type="ExpressionAtlas" id="P26445">
    <property type="expression patterns" value="baseline and differential"/>
</dbReference>
<dbReference type="GO" id="GO:0005615">
    <property type="term" value="C:extracellular space"/>
    <property type="evidence" value="ECO:0000318"/>
    <property type="project" value="GO_Central"/>
</dbReference>
<dbReference type="GO" id="GO:0016020">
    <property type="term" value="C:membrane"/>
    <property type="evidence" value="ECO:0007669"/>
    <property type="project" value="UniProtKB-SubCell"/>
</dbReference>
<dbReference type="GO" id="GO:0005125">
    <property type="term" value="F:cytokine activity"/>
    <property type="evidence" value="ECO:0000318"/>
    <property type="project" value="GO_Central"/>
</dbReference>
<dbReference type="GO" id="GO:0005164">
    <property type="term" value="F:tumor necrosis factor receptor binding"/>
    <property type="evidence" value="ECO:0007669"/>
    <property type="project" value="InterPro"/>
</dbReference>
<dbReference type="GO" id="GO:0007166">
    <property type="term" value="P:cell surface receptor signaling pathway"/>
    <property type="evidence" value="ECO:0000318"/>
    <property type="project" value="GO_Central"/>
</dbReference>
<dbReference type="GO" id="GO:0050830">
    <property type="term" value="P:defense response to Gram-positive bacterium"/>
    <property type="evidence" value="ECO:0007669"/>
    <property type="project" value="Ensembl"/>
</dbReference>
<dbReference type="GO" id="GO:0006959">
    <property type="term" value="P:humoral immune response"/>
    <property type="evidence" value="ECO:0000250"/>
    <property type="project" value="AgBase"/>
</dbReference>
<dbReference type="GO" id="GO:0006955">
    <property type="term" value="P:immune response"/>
    <property type="evidence" value="ECO:0000318"/>
    <property type="project" value="GO_Central"/>
</dbReference>
<dbReference type="GO" id="GO:0048535">
    <property type="term" value="P:lymph node development"/>
    <property type="evidence" value="ECO:0000250"/>
    <property type="project" value="AgBase"/>
</dbReference>
<dbReference type="GO" id="GO:0043123">
    <property type="term" value="P:positive regulation of canonical NF-kappaB signal transduction"/>
    <property type="evidence" value="ECO:0000318"/>
    <property type="project" value="GO_Central"/>
</dbReference>
<dbReference type="GO" id="GO:0002876">
    <property type="term" value="P:positive regulation of chronic inflammatory response to antigenic stimulus"/>
    <property type="evidence" value="ECO:0007669"/>
    <property type="project" value="Ensembl"/>
</dbReference>
<dbReference type="GO" id="GO:2001238">
    <property type="term" value="P:positive regulation of extrinsic apoptotic signaling pathway"/>
    <property type="evidence" value="ECO:0000318"/>
    <property type="project" value="GO_Central"/>
</dbReference>
<dbReference type="GO" id="GO:0002925">
    <property type="term" value="P:positive regulation of humoral immune response mediated by circulating immunoglobulin"/>
    <property type="evidence" value="ECO:0007669"/>
    <property type="project" value="Ensembl"/>
</dbReference>
<dbReference type="GO" id="GO:0032729">
    <property type="term" value="P:positive regulation of type II interferon production"/>
    <property type="evidence" value="ECO:0007669"/>
    <property type="project" value="Ensembl"/>
</dbReference>
<dbReference type="CDD" id="cd00184">
    <property type="entry name" value="TNF"/>
    <property type="match status" value="1"/>
</dbReference>
<dbReference type="FunFam" id="2.60.120.40:FF:000016">
    <property type="entry name" value="Tumor necrosis factor"/>
    <property type="match status" value="1"/>
</dbReference>
<dbReference type="Gene3D" id="2.60.120.40">
    <property type="match status" value="1"/>
</dbReference>
<dbReference type="InterPro" id="IPR006053">
    <property type="entry name" value="TNF"/>
</dbReference>
<dbReference type="InterPro" id="IPR002960">
    <property type="entry name" value="TNF_beta"/>
</dbReference>
<dbReference type="InterPro" id="IPR021184">
    <property type="entry name" value="TNF_CS"/>
</dbReference>
<dbReference type="InterPro" id="IPR006052">
    <property type="entry name" value="TNF_dom"/>
</dbReference>
<dbReference type="InterPro" id="IPR008983">
    <property type="entry name" value="Tumour_necrosis_fac-like_dom"/>
</dbReference>
<dbReference type="PANTHER" id="PTHR11471:SF31">
    <property type="entry name" value="LYMPHOTOXIN-ALPHA"/>
    <property type="match status" value="1"/>
</dbReference>
<dbReference type="PANTHER" id="PTHR11471">
    <property type="entry name" value="TUMOR NECROSIS FACTOR FAMILY MEMBER"/>
    <property type="match status" value="1"/>
</dbReference>
<dbReference type="Pfam" id="PF00229">
    <property type="entry name" value="TNF"/>
    <property type="match status" value="1"/>
</dbReference>
<dbReference type="PRINTS" id="PR01234">
    <property type="entry name" value="TNECROSISFCT"/>
</dbReference>
<dbReference type="PRINTS" id="PR01236">
    <property type="entry name" value="TNFBETA"/>
</dbReference>
<dbReference type="SMART" id="SM00207">
    <property type="entry name" value="TNF"/>
    <property type="match status" value="1"/>
</dbReference>
<dbReference type="SUPFAM" id="SSF49842">
    <property type="entry name" value="TNF-like"/>
    <property type="match status" value="1"/>
</dbReference>
<dbReference type="PROSITE" id="PS00251">
    <property type="entry name" value="THD_1"/>
    <property type="match status" value="1"/>
</dbReference>
<dbReference type="PROSITE" id="PS50049">
    <property type="entry name" value="THD_2"/>
    <property type="match status" value="1"/>
</dbReference>
<organism>
    <name type="scientific">Sus scrofa</name>
    <name type="common">Pig</name>
    <dbReference type="NCBI Taxonomy" id="9823"/>
    <lineage>
        <taxon>Eukaryota</taxon>
        <taxon>Metazoa</taxon>
        <taxon>Chordata</taxon>
        <taxon>Craniata</taxon>
        <taxon>Vertebrata</taxon>
        <taxon>Euteleostomi</taxon>
        <taxon>Mammalia</taxon>
        <taxon>Eutheria</taxon>
        <taxon>Laurasiatheria</taxon>
        <taxon>Artiodactyla</taxon>
        <taxon>Suina</taxon>
        <taxon>Suidae</taxon>
        <taxon>Sus</taxon>
    </lineage>
</organism>
<evidence type="ECO:0000250" key="1"/>
<evidence type="ECO:0000250" key="2">
    <source>
        <dbReference type="UniProtKB" id="P01374"/>
    </source>
</evidence>
<evidence type="ECO:0000255" key="3"/>
<evidence type="ECO:0000255" key="4">
    <source>
        <dbReference type="PROSITE-ProRule" id="PRU01387"/>
    </source>
</evidence>
<evidence type="ECO:0000305" key="5"/>
<proteinExistence type="inferred from homology"/>
<comment type="function">
    <text evidence="2">Cytokine that in its homotrimeric form binds to TNFRSF1A/TNFR1, TNFRSF1B/TNFBR and TNFRSF14/HVEM (By similarity). In its heterotrimeric form with LTB binds to TNFRSF3/LTBR. Lymphotoxin is produced by lymphocytes and is cytotoxic for a wide range of tumor cells in vitro and in vivo.</text>
</comment>
<comment type="subunit">
    <text evidence="2">Homotrimer, and heterotrimer of either two LTB and one LTA subunits or (less prevalent) two LTA and one LTB subunits. Interacts with TNFRSF14.</text>
</comment>
<comment type="subcellular location">
    <subcellularLocation>
        <location evidence="1">Secreted</location>
    </subcellularLocation>
    <subcellularLocation>
        <location evidence="1">Membrane</location>
    </subcellularLocation>
    <text evidence="1">The homotrimer is secreted. The heterotrimer is membrane-associated.</text>
</comment>
<comment type="similarity">
    <text evidence="5">Belongs to the tumor necrosis factor family.</text>
</comment>
<protein>
    <recommendedName>
        <fullName>Lymphotoxin-alpha</fullName>
        <shortName>LT-alpha</shortName>
    </recommendedName>
    <alternativeName>
        <fullName>TNF-beta</fullName>
    </alternativeName>
    <alternativeName>
        <fullName>Tumor necrosis factor ligand superfamily member 1</fullName>
    </alternativeName>
</protein>
<name>TNFB_PIG</name>
<sequence length="204" mass="21960">MTPPGRLYLRRVCSTPILLLLGLLLALPPEAQGLPGVGLPPSAAQPAHQHPPKHLARGTLKPAAHLVGDPSTPDSLRWRANTDRAFLRHGFLLSNNSLLVPTSGLYFVYSQVVFSGEGCFPKATPTPLYLAHEVQLFSSQYPFHVPLLSAQKSVCPGPQGPWVRSVYQGAVFLLTQGDQLSTHTDGTPHLLLSPSSVFFGAFAL</sequence>
<keyword id="KW-0202">Cytokine</keyword>
<keyword id="KW-1015">Disulfide bond</keyword>
<keyword id="KW-0325">Glycoprotein</keyword>
<keyword id="KW-0472">Membrane</keyword>
<keyword id="KW-1185">Reference proteome</keyword>
<keyword id="KW-0964">Secreted</keyword>
<keyword id="KW-0732">Signal</keyword>
<feature type="signal peptide">
    <location>
        <begin position="1"/>
        <end position="33"/>
    </location>
</feature>
<feature type="chain" id="PRO_0000034469" description="Lymphotoxin-alpha">
    <location>
        <begin position="34"/>
        <end position="204"/>
    </location>
</feature>
<feature type="domain" description="THD" evidence="4">
    <location>
        <begin position="62"/>
        <end position="204"/>
    </location>
</feature>
<feature type="glycosylation site" description="N-linked (GlcNAc...) asparagine" evidence="3">
    <location>
        <position position="95"/>
    </location>
</feature>
<feature type="disulfide bond" evidence="4">
    <location>
        <begin position="119"/>
        <end position="155"/>
    </location>
</feature>